<reference key="1">
    <citation type="journal article" date="2002" name="Nature">
        <title>The genome sequence of Schizosaccharomyces pombe.</title>
        <authorList>
            <person name="Wood V."/>
            <person name="Gwilliam R."/>
            <person name="Rajandream M.A."/>
            <person name="Lyne M.H."/>
            <person name="Lyne R."/>
            <person name="Stewart A."/>
            <person name="Sgouros J.G."/>
            <person name="Peat N."/>
            <person name="Hayles J."/>
            <person name="Baker S.G."/>
            <person name="Basham D."/>
            <person name="Bowman S."/>
            <person name="Brooks K."/>
            <person name="Brown D."/>
            <person name="Brown S."/>
            <person name="Chillingworth T."/>
            <person name="Churcher C.M."/>
            <person name="Collins M."/>
            <person name="Connor R."/>
            <person name="Cronin A."/>
            <person name="Davis P."/>
            <person name="Feltwell T."/>
            <person name="Fraser A."/>
            <person name="Gentles S."/>
            <person name="Goble A."/>
            <person name="Hamlin N."/>
            <person name="Harris D.E."/>
            <person name="Hidalgo J."/>
            <person name="Hodgson G."/>
            <person name="Holroyd S."/>
            <person name="Hornsby T."/>
            <person name="Howarth S."/>
            <person name="Huckle E.J."/>
            <person name="Hunt S."/>
            <person name="Jagels K."/>
            <person name="James K.D."/>
            <person name="Jones L."/>
            <person name="Jones M."/>
            <person name="Leather S."/>
            <person name="McDonald S."/>
            <person name="McLean J."/>
            <person name="Mooney P."/>
            <person name="Moule S."/>
            <person name="Mungall K.L."/>
            <person name="Murphy L.D."/>
            <person name="Niblett D."/>
            <person name="Odell C."/>
            <person name="Oliver K."/>
            <person name="O'Neil S."/>
            <person name="Pearson D."/>
            <person name="Quail M.A."/>
            <person name="Rabbinowitsch E."/>
            <person name="Rutherford K.M."/>
            <person name="Rutter S."/>
            <person name="Saunders D."/>
            <person name="Seeger K."/>
            <person name="Sharp S."/>
            <person name="Skelton J."/>
            <person name="Simmonds M.N."/>
            <person name="Squares R."/>
            <person name="Squares S."/>
            <person name="Stevens K."/>
            <person name="Taylor K."/>
            <person name="Taylor R.G."/>
            <person name="Tivey A."/>
            <person name="Walsh S.V."/>
            <person name="Warren T."/>
            <person name="Whitehead S."/>
            <person name="Woodward J.R."/>
            <person name="Volckaert G."/>
            <person name="Aert R."/>
            <person name="Robben J."/>
            <person name="Grymonprez B."/>
            <person name="Weltjens I."/>
            <person name="Vanstreels E."/>
            <person name="Rieger M."/>
            <person name="Schaefer M."/>
            <person name="Mueller-Auer S."/>
            <person name="Gabel C."/>
            <person name="Fuchs M."/>
            <person name="Duesterhoeft A."/>
            <person name="Fritzc C."/>
            <person name="Holzer E."/>
            <person name="Moestl D."/>
            <person name="Hilbert H."/>
            <person name="Borzym K."/>
            <person name="Langer I."/>
            <person name="Beck A."/>
            <person name="Lehrach H."/>
            <person name="Reinhardt R."/>
            <person name="Pohl T.M."/>
            <person name="Eger P."/>
            <person name="Zimmermann W."/>
            <person name="Wedler H."/>
            <person name="Wambutt R."/>
            <person name="Purnelle B."/>
            <person name="Goffeau A."/>
            <person name="Cadieu E."/>
            <person name="Dreano S."/>
            <person name="Gloux S."/>
            <person name="Lelaure V."/>
            <person name="Mottier S."/>
            <person name="Galibert F."/>
            <person name="Aves S.J."/>
            <person name="Xiang Z."/>
            <person name="Hunt C."/>
            <person name="Moore K."/>
            <person name="Hurst S.M."/>
            <person name="Lucas M."/>
            <person name="Rochet M."/>
            <person name="Gaillardin C."/>
            <person name="Tallada V.A."/>
            <person name="Garzon A."/>
            <person name="Thode G."/>
            <person name="Daga R.R."/>
            <person name="Cruzado L."/>
            <person name="Jimenez J."/>
            <person name="Sanchez M."/>
            <person name="del Rey F."/>
            <person name="Benito J."/>
            <person name="Dominguez A."/>
            <person name="Revuelta J.L."/>
            <person name="Moreno S."/>
            <person name="Armstrong J."/>
            <person name="Forsburg S.L."/>
            <person name="Cerutti L."/>
            <person name="Lowe T."/>
            <person name="McCombie W.R."/>
            <person name="Paulsen I."/>
            <person name="Potashkin J."/>
            <person name="Shpakovski G.V."/>
            <person name="Ussery D."/>
            <person name="Barrell B.G."/>
            <person name="Nurse P."/>
        </authorList>
    </citation>
    <scope>NUCLEOTIDE SEQUENCE [LARGE SCALE GENOMIC DNA]</scope>
    <source>
        <strain>972 / ATCC 24843</strain>
    </source>
</reference>
<reference key="2">
    <citation type="journal article" date="2006" name="Nat. Biotechnol.">
        <title>ORFeome cloning and global analysis of protein localization in the fission yeast Schizosaccharomyces pombe.</title>
        <authorList>
            <person name="Matsuyama A."/>
            <person name="Arai R."/>
            <person name="Yashiroda Y."/>
            <person name="Shirai A."/>
            <person name="Kamata A."/>
            <person name="Sekido S."/>
            <person name="Kobayashi Y."/>
            <person name="Hashimoto A."/>
            <person name="Hamamoto M."/>
            <person name="Hiraoka Y."/>
            <person name="Horinouchi S."/>
            <person name="Yoshida M."/>
        </authorList>
    </citation>
    <scope>SUBCELLULAR LOCATION [LARGE SCALE ANALYSIS]</scope>
</reference>
<gene>
    <name type="ORF">SPBC30D10.14</name>
</gene>
<comment type="subcellular location">
    <subcellularLocation>
        <location evidence="1">Cytoplasm</location>
    </subcellularLocation>
    <subcellularLocation>
        <location evidence="1">Nucleus</location>
    </subcellularLocation>
</comment>
<comment type="similarity">
    <text evidence="2">Belongs to the AIM2 family.</text>
</comment>
<protein>
    <recommendedName>
        <fullName>Uncharacterized AIM2 family protein C30D10.14</fullName>
    </recommendedName>
</protein>
<feature type="chain" id="PRO_0000116501" description="Uncharacterized AIM2 family protein C30D10.14">
    <location>
        <begin position="1"/>
        <end position="249"/>
    </location>
</feature>
<dbReference type="EMBL" id="CU329671">
    <property type="protein sequence ID" value="CAB10809.1"/>
    <property type="molecule type" value="Genomic_DNA"/>
</dbReference>
<dbReference type="PIR" id="T40182">
    <property type="entry name" value="T40182"/>
</dbReference>
<dbReference type="RefSeq" id="NP_596271.1">
    <property type="nucleotide sequence ID" value="NM_001022192.2"/>
</dbReference>
<dbReference type="SMR" id="O14359"/>
<dbReference type="BioGRID" id="276888">
    <property type="interactions" value="9"/>
</dbReference>
<dbReference type="FunCoup" id="O14359">
    <property type="interactions" value="25"/>
</dbReference>
<dbReference type="STRING" id="284812.O14359"/>
<dbReference type="ESTHER" id="schpo-yb4e">
    <property type="family name" value="Dienelactone_hydrolase"/>
</dbReference>
<dbReference type="iPTMnet" id="O14359"/>
<dbReference type="PaxDb" id="4896-SPBC30D10.14.1"/>
<dbReference type="EnsemblFungi" id="SPBC30D10.14.1">
    <property type="protein sequence ID" value="SPBC30D10.14.1:pep"/>
    <property type="gene ID" value="SPBC30D10.14"/>
</dbReference>
<dbReference type="KEGG" id="spo:2540359"/>
<dbReference type="PomBase" id="SPBC30D10.14"/>
<dbReference type="VEuPathDB" id="FungiDB:SPBC30D10.14"/>
<dbReference type="eggNOG" id="KOG3043">
    <property type="taxonomic scope" value="Eukaryota"/>
</dbReference>
<dbReference type="HOGENOM" id="CLU_054590_0_1_1"/>
<dbReference type="InParanoid" id="O14359"/>
<dbReference type="OMA" id="PTEWYPP"/>
<dbReference type="PhylomeDB" id="O14359"/>
<dbReference type="PRO" id="PR:O14359"/>
<dbReference type="Proteomes" id="UP000002485">
    <property type="component" value="Chromosome II"/>
</dbReference>
<dbReference type="GO" id="GO:0005829">
    <property type="term" value="C:cytosol"/>
    <property type="evidence" value="ECO:0007005"/>
    <property type="project" value="PomBase"/>
</dbReference>
<dbReference type="GO" id="GO:0005634">
    <property type="term" value="C:nucleus"/>
    <property type="evidence" value="ECO:0007005"/>
    <property type="project" value="PomBase"/>
</dbReference>
<dbReference type="GO" id="GO:0016787">
    <property type="term" value="F:hydrolase activity"/>
    <property type="evidence" value="ECO:0007669"/>
    <property type="project" value="InterPro"/>
</dbReference>
<dbReference type="FunFam" id="3.40.50.1820:FF:000178">
    <property type="entry name" value="Carboxymethylenebutenolidase homolog"/>
    <property type="match status" value="1"/>
</dbReference>
<dbReference type="Gene3D" id="3.40.50.1820">
    <property type="entry name" value="alpha/beta hydrolase"/>
    <property type="match status" value="1"/>
</dbReference>
<dbReference type="InterPro" id="IPR029058">
    <property type="entry name" value="AB_hydrolase_fold"/>
</dbReference>
<dbReference type="InterPro" id="IPR002925">
    <property type="entry name" value="Dienelactn_hydro"/>
</dbReference>
<dbReference type="PANTHER" id="PTHR47668:SF1">
    <property type="entry name" value="DIENELACTONE HYDROLASE DOMAIN-CONTAINING PROTEIN-RELATED"/>
    <property type="match status" value="1"/>
</dbReference>
<dbReference type="PANTHER" id="PTHR47668">
    <property type="entry name" value="DIENELACTONE HYDROLASE FAMILY PROTEIN (AFU_ORTHOLOGUE AFUA_6G01940)"/>
    <property type="match status" value="1"/>
</dbReference>
<dbReference type="Pfam" id="PF01738">
    <property type="entry name" value="DLH"/>
    <property type="match status" value="1"/>
</dbReference>
<dbReference type="SUPFAM" id="SSF53474">
    <property type="entry name" value="alpha/beta-Hydrolases"/>
    <property type="match status" value="1"/>
</dbReference>
<name>YB4E_SCHPO</name>
<proteinExistence type="inferred from homology"/>
<accession>O14359</accession>
<sequence length="249" mass="27414">MASCCPTSRGAAASNKSYTFKGKEIENFGGLTTYVVGSTSNTRVLIGFMDIFGLSDQIKEGADKLADDGFTVYLPDFLEGKPLPVTALPPKTPEDQKLCNDFFSTRISPNLHWPKLAKVVEAVRANHGPNVTIGTYGFCWGAKVLVTYPATIDFVGIASCHPSFPDSADAANVHCPVLFLCSKDEDAKIIKEWEEAFKTNPAYAKSSFETFSDMFHGWMAARADLSNPEQRKRFDEGYQKVSSFFQSLM</sequence>
<evidence type="ECO:0000269" key="1">
    <source>
    </source>
</evidence>
<evidence type="ECO:0000305" key="2"/>
<keyword id="KW-0963">Cytoplasm</keyword>
<keyword id="KW-0539">Nucleus</keyword>
<keyword id="KW-1185">Reference proteome</keyword>
<organism>
    <name type="scientific">Schizosaccharomyces pombe (strain 972 / ATCC 24843)</name>
    <name type="common">Fission yeast</name>
    <dbReference type="NCBI Taxonomy" id="284812"/>
    <lineage>
        <taxon>Eukaryota</taxon>
        <taxon>Fungi</taxon>
        <taxon>Dikarya</taxon>
        <taxon>Ascomycota</taxon>
        <taxon>Taphrinomycotina</taxon>
        <taxon>Schizosaccharomycetes</taxon>
        <taxon>Schizosaccharomycetales</taxon>
        <taxon>Schizosaccharomycetaceae</taxon>
        <taxon>Schizosaccharomyces</taxon>
    </lineage>
</organism>